<protein>
    <recommendedName>
        <fullName evidence="1">Ribosome-binding factor A</fullName>
    </recommendedName>
</protein>
<proteinExistence type="inferred from homology"/>
<sequence length="142" mass="15977">MAQKPTSTGPSQRQQRVAELVRHALAEVLQRGDIQDPVLGTHVVTVPEVRMSPDLKLATAYVMPLGGLDEAPVIAALERHRKVLRQAVARRVNLKFAPELRFRRDETFDEAARIDRLLRDERVQRDLDSAPEDDEPETGTGH</sequence>
<feature type="chain" id="PRO_1000201643" description="Ribosome-binding factor A">
    <location>
        <begin position="1"/>
        <end position="142"/>
    </location>
</feature>
<feature type="region of interest" description="Disordered" evidence="2">
    <location>
        <begin position="123"/>
        <end position="142"/>
    </location>
</feature>
<feature type="compositionally biased region" description="Acidic residues" evidence="2">
    <location>
        <begin position="129"/>
        <end position="142"/>
    </location>
</feature>
<accession>B1LWZ6</accession>
<comment type="function">
    <text evidence="1">One of several proteins that assist in the late maturation steps of the functional core of the 30S ribosomal subunit. Associates with free 30S ribosomal subunits (but not with 30S subunits that are part of 70S ribosomes or polysomes). Required for efficient processing of 16S rRNA. May interact with the 5'-terminal helix region of 16S rRNA.</text>
</comment>
<comment type="subunit">
    <text evidence="1">Monomer. Binds 30S ribosomal subunits, but not 50S ribosomal subunits or 70S ribosomes.</text>
</comment>
<comment type="subcellular location">
    <subcellularLocation>
        <location evidence="1">Cytoplasm</location>
    </subcellularLocation>
</comment>
<comment type="similarity">
    <text evidence="1">Belongs to the RbfA family.</text>
</comment>
<gene>
    <name evidence="1" type="primary">rbfA</name>
    <name type="ordered locus">Mrad2831_3726</name>
</gene>
<keyword id="KW-0963">Cytoplasm</keyword>
<keyword id="KW-0690">Ribosome biogenesis</keyword>
<evidence type="ECO:0000255" key="1">
    <source>
        <dbReference type="HAMAP-Rule" id="MF_00003"/>
    </source>
</evidence>
<evidence type="ECO:0000256" key="2">
    <source>
        <dbReference type="SAM" id="MobiDB-lite"/>
    </source>
</evidence>
<organism>
    <name type="scientific">Methylobacterium radiotolerans (strain ATCC 27329 / DSM 1819 / JCM 2831 / NBRC 15690 / NCIMB 10815 / 0-1)</name>
    <dbReference type="NCBI Taxonomy" id="426355"/>
    <lineage>
        <taxon>Bacteria</taxon>
        <taxon>Pseudomonadati</taxon>
        <taxon>Pseudomonadota</taxon>
        <taxon>Alphaproteobacteria</taxon>
        <taxon>Hyphomicrobiales</taxon>
        <taxon>Methylobacteriaceae</taxon>
        <taxon>Methylobacterium</taxon>
    </lineage>
</organism>
<dbReference type="EMBL" id="CP001001">
    <property type="protein sequence ID" value="ACB25701.1"/>
    <property type="molecule type" value="Genomic_DNA"/>
</dbReference>
<dbReference type="RefSeq" id="WP_012320660.1">
    <property type="nucleotide sequence ID" value="NC_010505.1"/>
</dbReference>
<dbReference type="SMR" id="B1LWZ6"/>
<dbReference type="STRING" id="426355.Mrad2831_3726"/>
<dbReference type="GeneID" id="6139779"/>
<dbReference type="KEGG" id="mrd:Mrad2831_3726"/>
<dbReference type="eggNOG" id="COG0858">
    <property type="taxonomic scope" value="Bacteria"/>
</dbReference>
<dbReference type="HOGENOM" id="CLU_089475_1_0_5"/>
<dbReference type="OrthoDB" id="9805051at2"/>
<dbReference type="Proteomes" id="UP000006589">
    <property type="component" value="Chromosome"/>
</dbReference>
<dbReference type="GO" id="GO:0005829">
    <property type="term" value="C:cytosol"/>
    <property type="evidence" value="ECO:0007669"/>
    <property type="project" value="TreeGrafter"/>
</dbReference>
<dbReference type="GO" id="GO:0043024">
    <property type="term" value="F:ribosomal small subunit binding"/>
    <property type="evidence" value="ECO:0007669"/>
    <property type="project" value="TreeGrafter"/>
</dbReference>
<dbReference type="GO" id="GO:0030490">
    <property type="term" value="P:maturation of SSU-rRNA"/>
    <property type="evidence" value="ECO:0007669"/>
    <property type="project" value="UniProtKB-UniRule"/>
</dbReference>
<dbReference type="Gene3D" id="3.30.300.20">
    <property type="match status" value="1"/>
</dbReference>
<dbReference type="HAMAP" id="MF_00003">
    <property type="entry name" value="RbfA"/>
    <property type="match status" value="1"/>
</dbReference>
<dbReference type="InterPro" id="IPR015946">
    <property type="entry name" value="KH_dom-like_a/b"/>
</dbReference>
<dbReference type="InterPro" id="IPR000238">
    <property type="entry name" value="RbfA"/>
</dbReference>
<dbReference type="InterPro" id="IPR023799">
    <property type="entry name" value="RbfA_dom_sf"/>
</dbReference>
<dbReference type="InterPro" id="IPR020053">
    <property type="entry name" value="Ribosome-bd_factorA_CS"/>
</dbReference>
<dbReference type="NCBIfam" id="NF001802">
    <property type="entry name" value="PRK00521.2-5"/>
    <property type="match status" value="1"/>
</dbReference>
<dbReference type="NCBIfam" id="TIGR00082">
    <property type="entry name" value="rbfA"/>
    <property type="match status" value="1"/>
</dbReference>
<dbReference type="PANTHER" id="PTHR33515">
    <property type="entry name" value="RIBOSOME-BINDING FACTOR A, CHLOROPLASTIC-RELATED"/>
    <property type="match status" value="1"/>
</dbReference>
<dbReference type="PANTHER" id="PTHR33515:SF1">
    <property type="entry name" value="RIBOSOME-BINDING FACTOR A, CHLOROPLASTIC-RELATED"/>
    <property type="match status" value="1"/>
</dbReference>
<dbReference type="Pfam" id="PF02033">
    <property type="entry name" value="RBFA"/>
    <property type="match status" value="1"/>
</dbReference>
<dbReference type="SUPFAM" id="SSF89919">
    <property type="entry name" value="Ribosome-binding factor A, RbfA"/>
    <property type="match status" value="1"/>
</dbReference>
<dbReference type="PROSITE" id="PS01319">
    <property type="entry name" value="RBFA"/>
    <property type="match status" value="1"/>
</dbReference>
<name>RBFA_METRJ</name>
<reference key="1">
    <citation type="submission" date="2008-03" db="EMBL/GenBank/DDBJ databases">
        <title>Complete sequence of chromosome of Methylobacterium radiotolerans JCM 2831.</title>
        <authorList>
            <consortium name="US DOE Joint Genome Institute"/>
            <person name="Copeland A."/>
            <person name="Lucas S."/>
            <person name="Lapidus A."/>
            <person name="Glavina del Rio T."/>
            <person name="Dalin E."/>
            <person name="Tice H."/>
            <person name="Bruce D."/>
            <person name="Goodwin L."/>
            <person name="Pitluck S."/>
            <person name="Kiss H."/>
            <person name="Brettin T."/>
            <person name="Detter J.C."/>
            <person name="Han C."/>
            <person name="Kuske C.R."/>
            <person name="Schmutz J."/>
            <person name="Larimer F."/>
            <person name="Land M."/>
            <person name="Hauser L."/>
            <person name="Kyrpides N."/>
            <person name="Mikhailova N."/>
            <person name="Marx C.J."/>
            <person name="Richardson P."/>
        </authorList>
    </citation>
    <scope>NUCLEOTIDE SEQUENCE [LARGE SCALE GENOMIC DNA]</scope>
    <source>
        <strain>ATCC 27329 / DSM 1819 / JCM 2831 / NBRC 15690 / NCIMB 10815 / 0-1</strain>
    </source>
</reference>